<accession>P0A9L5</accession>
<accession>P39159</accession>
<accession>Q2M884</accession>
<reference key="1">
    <citation type="journal article" date="1994" name="FEBS Lett.">
        <title>Confirmation of the existence of a third family among peptidyl-prolyl cis/trans isomerases. Amino acid sequence and recombinant production of parvulin.</title>
        <authorList>
            <person name="Rahfeld J.-U."/>
            <person name="Ruecknagel K.P."/>
            <person name="Schelbert B."/>
            <person name="Ludwig B."/>
            <person name="Hacker J."/>
            <person name="Mann K."/>
            <person name="Fischer G."/>
        </authorList>
    </citation>
    <scope>NUCLEOTIDE SEQUENCE [GENOMIC DNA]</scope>
    <scope>PROTEIN SEQUENCE OF 2-93</scope>
</reference>
<reference key="2">
    <citation type="journal article" date="1992" name="Science">
        <title>Analysis of the Escherichia coli genome: DNA sequence of the region from 84.5 to 86.5 minutes.</title>
        <authorList>
            <person name="Daniels D.L."/>
            <person name="Plunkett G. III"/>
            <person name="Burland V.D."/>
            <person name="Blattner F.R."/>
        </authorList>
    </citation>
    <scope>NUCLEOTIDE SEQUENCE [LARGE SCALE GENOMIC DNA]</scope>
    <source>
        <strain>K12 / MG1655 / ATCC 47076</strain>
    </source>
</reference>
<reference key="3">
    <citation type="journal article" date="1997" name="Science">
        <title>The complete genome sequence of Escherichia coli K-12.</title>
        <authorList>
            <person name="Blattner F.R."/>
            <person name="Plunkett G. III"/>
            <person name="Bloch C.A."/>
            <person name="Perna N.T."/>
            <person name="Burland V."/>
            <person name="Riley M."/>
            <person name="Collado-Vides J."/>
            <person name="Glasner J.D."/>
            <person name="Rode C.K."/>
            <person name="Mayhew G.F."/>
            <person name="Gregor J."/>
            <person name="Davis N.W."/>
            <person name="Kirkpatrick H.A."/>
            <person name="Goeden M.A."/>
            <person name="Rose D.J."/>
            <person name="Mau B."/>
            <person name="Shao Y."/>
        </authorList>
    </citation>
    <scope>NUCLEOTIDE SEQUENCE [LARGE SCALE GENOMIC DNA]</scope>
    <scope>SEQUENCE REVISION</scope>
    <source>
        <strain>K12 / MG1655 / ATCC 47076</strain>
    </source>
</reference>
<reference key="4">
    <citation type="journal article" date="2006" name="Mol. Syst. Biol.">
        <title>Highly accurate genome sequences of Escherichia coli K-12 strains MG1655 and W3110.</title>
        <authorList>
            <person name="Hayashi K."/>
            <person name="Morooka N."/>
            <person name="Yamamoto Y."/>
            <person name="Fujita K."/>
            <person name="Isono K."/>
            <person name="Choi S."/>
            <person name="Ohtsubo E."/>
            <person name="Baba T."/>
            <person name="Wanner B.L."/>
            <person name="Mori H."/>
            <person name="Horiuchi T."/>
        </authorList>
    </citation>
    <scope>NUCLEOTIDE SEQUENCE [LARGE SCALE GENOMIC DNA]</scope>
    <source>
        <strain>K12 / W3110 / ATCC 27325 / DSM 5911</strain>
    </source>
</reference>
<reference key="5">
    <citation type="journal article" date="1994" name="FEBS Lett.">
        <title>A novel peptidyl-prolyl cis/trans isomerase from Escherichia coli.</title>
        <authorList>
            <person name="Rahfeld J.-U."/>
            <person name="Schierhorn A."/>
            <person name="Mann K."/>
            <person name="Fischer G."/>
        </authorList>
    </citation>
    <scope>PROTEIN SEQUENCE OF 2-22</scope>
    <scope>CATALYTIC ACTIVITY</scope>
    <scope>ACTIVITY REGULATION</scope>
</reference>
<reference key="6">
    <citation type="journal article" date="1995" name="Trends Biochem. Sci.">
        <title>Conserved sequence motifs in bacterial and bacteriophage chaperonins.</title>
        <authorList>
            <person name="Rudd K.E."/>
            <person name="Sofia H.J."/>
            <person name="Koonin E.V."/>
            <person name="Plunkett G. III"/>
            <person name="Lazar S."/>
            <person name="Rouviere P.E."/>
        </authorList>
    </citation>
    <scope>IDENTIFICATION</scope>
</reference>
<reference key="7">
    <citation type="journal article" date="2004" name="Protein Sci.">
        <title>Solution structure of Escherichia coli Par10: the prototypic member of the parvulin family of peptidyl-prolyl cis/trans isomerases.</title>
        <authorList>
            <person name="Kuhlewein A."/>
            <person name="Voll G."/>
            <person name="Hernandez Alvarez B."/>
            <person name="Kessler H."/>
            <person name="Fischer G."/>
            <person name="Rahfeld J.-U."/>
            <person name="Gemmecker G."/>
        </authorList>
    </citation>
    <scope>STRUCTURE BY NMR</scope>
</reference>
<dbReference type="EC" id="5.2.1.8" evidence="3"/>
<dbReference type="EMBL" id="S73874">
    <property type="protein sequence ID" value="AAB32054.1"/>
    <property type="molecule type" value="Genomic_DNA"/>
</dbReference>
<dbReference type="EMBL" id="M87049">
    <property type="protein sequence ID" value="AAA67578.1"/>
    <property type="molecule type" value="Genomic_DNA"/>
</dbReference>
<dbReference type="EMBL" id="U00096">
    <property type="protein sequence ID" value="AAC76780.1"/>
    <property type="molecule type" value="Genomic_DNA"/>
</dbReference>
<dbReference type="EMBL" id="AP009048">
    <property type="protein sequence ID" value="BAE77522.1"/>
    <property type="molecule type" value="Genomic_DNA"/>
</dbReference>
<dbReference type="PIR" id="S48658">
    <property type="entry name" value="S48658"/>
</dbReference>
<dbReference type="RefSeq" id="NP_418223.1">
    <property type="nucleotide sequence ID" value="NC_000913.3"/>
</dbReference>
<dbReference type="RefSeq" id="WP_001140251.1">
    <property type="nucleotide sequence ID" value="NZ_STEB01000021.1"/>
</dbReference>
<dbReference type="PDB" id="1JNS">
    <property type="method" value="NMR"/>
    <property type="chains" value="A=2-93"/>
</dbReference>
<dbReference type="PDB" id="1JNT">
    <property type="method" value="NMR"/>
    <property type="chains" value="A=2-93"/>
</dbReference>
<dbReference type="PDBsum" id="1JNS"/>
<dbReference type="PDBsum" id="1JNT"/>
<dbReference type="BMRB" id="P0A9L5"/>
<dbReference type="SMR" id="P0A9L5"/>
<dbReference type="BioGRID" id="4263314">
    <property type="interactions" value="202"/>
</dbReference>
<dbReference type="BioGRID" id="852585">
    <property type="interactions" value="2"/>
</dbReference>
<dbReference type="DIP" id="DIP-48081N"/>
<dbReference type="FunCoup" id="P0A9L5">
    <property type="interactions" value="409"/>
</dbReference>
<dbReference type="IntAct" id="P0A9L5">
    <property type="interactions" value="13"/>
</dbReference>
<dbReference type="STRING" id="511145.b3775"/>
<dbReference type="jPOST" id="P0A9L5"/>
<dbReference type="PaxDb" id="511145-b3775"/>
<dbReference type="EnsemblBacteria" id="AAC76780">
    <property type="protein sequence ID" value="AAC76780"/>
    <property type="gene ID" value="b3775"/>
</dbReference>
<dbReference type="GeneID" id="93778170"/>
<dbReference type="GeneID" id="948285"/>
<dbReference type="KEGG" id="ecj:JW3748"/>
<dbReference type="KEGG" id="eco:b3775"/>
<dbReference type="KEGG" id="ecoc:C3026_20445"/>
<dbReference type="PATRIC" id="fig|1411691.4.peg.2931"/>
<dbReference type="EchoBASE" id="EB2256"/>
<dbReference type="eggNOG" id="COG0760">
    <property type="taxonomic scope" value="Bacteria"/>
</dbReference>
<dbReference type="HOGENOM" id="CLU_090028_6_1_6"/>
<dbReference type="InParanoid" id="P0A9L5"/>
<dbReference type="OMA" id="GPVRTQF"/>
<dbReference type="OrthoDB" id="9812372at2"/>
<dbReference type="PhylomeDB" id="P0A9L5"/>
<dbReference type="BioCyc" id="EcoCyc:EG12352-MONOMER"/>
<dbReference type="BioCyc" id="MetaCyc:EG12352-MONOMER"/>
<dbReference type="BRENDA" id="5.2.1.8">
    <property type="organism ID" value="2026"/>
</dbReference>
<dbReference type="EvolutionaryTrace" id="P0A9L5"/>
<dbReference type="PRO" id="PR:P0A9L5"/>
<dbReference type="Proteomes" id="UP000000625">
    <property type="component" value="Chromosome"/>
</dbReference>
<dbReference type="GO" id="GO:0005737">
    <property type="term" value="C:cytoplasm"/>
    <property type="evidence" value="ECO:0007669"/>
    <property type="project" value="UniProtKB-SubCell"/>
</dbReference>
<dbReference type="GO" id="GO:0003755">
    <property type="term" value="F:peptidyl-prolyl cis-trans isomerase activity"/>
    <property type="evidence" value="ECO:0000314"/>
    <property type="project" value="EcoCyc"/>
</dbReference>
<dbReference type="FunFam" id="3.10.50.40:FF:000003">
    <property type="entry name" value="Peptidylprolyl isomerase"/>
    <property type="match status" value="1"/>
</dbReference>
<dbReference type="Gene3D" id="3.10.50.40">
    <property type="match status" value="1"/>
</dbReference>
<dbReference type="InterPro" id="IPR046357">
    <property type="entry name" value="PPIase_dom_sf"/>
</dbReference>
<dbReference type="InterPro" id="IPR000297">
    <property type="entry name" value="PPIase_PpiC"/>
</dbReference>
<dbReference type="InterPro" id="IPR023058">
    <property type="entry name" value="PPIase_PpiC_CS"/>
</dbReference>
<dbReference type="InterPro" id="IPR052204">
    <property type="entry name" value="PpiC/parvulin_rotamase"/>
</dbReference>
<dbReference type="NCBIfam" id="NF011969">
    <property type="entry name" value="PRK15441.1"/>
    <property type="match status" value="1"/>
</dbReference>
<dbReference type="PANTHER" id="PTHR43629">
    <property type="entry name" value="PEPTIDYL-PROLYL CIS-TRANS ISOMERASE"/>
    <property type="match status" value="1"/>
</dbReference>
<dbReference type="PANTHER" id="PTHR43629:SF3">
    <property type="entry name" value="PEPTIDYL-PROLYL CIS-TRANS ISOMERASE C"/>
    <property type="match status" value="1"/>
</dbReference>
<dbReference type="Pfam" id="PF13616">
    <property type="entry name" value="Rotamase_3"/>
    <property type="match status" value="1"/>
</dbReference>
<dbReference type="SUPFAM" id="SSF54534">
    <property type="entry name" value="FKBP-like"/>
    <property type="match status" value="1"/>
</dbReference>
<dbReference type="PROSITE" id="PS01096">
    <property type="entry name" value="PPIC_PPIASE_1"/>
    <property type="match status" value="1"/>
</dbReference>
<dbReference type="PROSITE" id="PS50198">
    <property type="entry name" value="PPIC_PPIASE_2"/>
    <property type="match status" value="1"/>
</dbReference>
<evidence type="ECO:0000255" key="1">
    <source>
        <dbReference type="PROSITE-ProRule" id="PRU00278"/>
    </source>
</evidence>
<evidence type="ECO:0000269" key="2">
    <source>
    </source>
</evidence>
<evidence type="ECO:0000269" key="3">
    <source>
    </source>
</evidence>
<evidence type="ECO:0000303" key="4">
    <source>
    </source>
</evidence>
<evidence type="ECO:0000305" key="5"/>
<evidence type="ECO:0007829" key="6">
    <source>
        <dbReference type="PDB" id="1JNS"/>
    </source>
</evidence>
<evidence type="ECO:0007829" key="7">
    <source>
        <dbReference type="PDB" id="1JNT"/>
    </source>
</evidence>
<keyword id="KW-0002">3D-structure</keyword>
<keyword id="KW-0963">Cytoplasm</keyword>
<keyword id="KW-0903">Direct protein sequencing</keyword>
<keyword id="KW-0413">Isomerase</keyword>
<keyword id="KW-1185">Reference proteome</keyword>
<keyword id="KW-0697">Rotamase</keyword>
<comment type="function">
    <text evidence="5">PPIases accelerate the folding of proteins (Probable). It prefers amino acid residues with hydrophobic side chains like leucine and phenylalanine in the P1 position of the peptides substrates.</text>
</comment>
<comment type="catalytic activity">
    <reaction evidence="3">
        <text>[protein]-peptidylproline (omega=180) = [protein]-peptidylproline (omega=0)</text>
        <dbReference type="Rhea" id="RHEA:16237"/>
        <dbReference type="Rhea" id="RHEA-COMP:10747"/>
        <dbReference type="Rhea" id="RHEA-COMP:10748"/>
        <dbReference type="ChEBI" id="CHEBI:83833"/>
        <dbReference type="ChEBI" id="CHEBI:83834"/>
        <dbReference type="EC" id="5.2.1.8"/>
    </reaction>
</comment>
<comment type="activity regulation">
    <text evidence="3">Not inhibited by cyclosporin A or FK506.</text>
</comment>
<comment type="interaction">
    <interactant intactId="EBI-555953">
        <id>P0A9L5</id>
    </interactant>
    <interactant intactId="EBI-555990">
        <id>P37339</id>
        <label>lhgD</label>
    </interactant>
    <organismsDiffer>false</organismsDiffer>
    <experiments>3</experiments>
</comment>
<comment type="subcellular location">
    <subcellularLocation>
        <location>Cytoplasm</location>
    </subcellularLocation>
</comment>
<comment type="similarity">
    <text evidence="5">Belongs to the PpiC/parvulin rotamase family.</text>
</comment>
<name>PPIC_ECOLI</name>
<protein>
    <recommendedName>
        <fullName>Peptidyl-prolyl cis-trans isomerase C</fullName>
        <shortName>PPIase C</shortName>
        <ecNumber evidence="3">5.2.1.8</ecNumber>
    </recommendedName>
    <alternativeName>
        <fullName evidence="4">Par10</fullName>
    </alternativeName>
    <alternativeName>
        <fullName>Parvulin</fullName>
    </alternativeName>
    <alternativeName>
        <fullName>Rotamase C</fullName>
    </alternativeName>
</protein>
<feature type="initiator methionine" description="Removed" evidence="2 3">
    <location>
        <position position="1"/>
    </location>
</feature>
<feature type="chain" id="PRO_0000193415" description="Peptidyl-prolyl cis-trans isomerase C">
    <location>
        <begin position="2"/>
        <end position="93"/>
    </location>
</feature>
<feature type="domain" description="PpiC" evidence="1">
    <location>
        <begin position="2"/>
        <end position="91"/>
    </location>
</feature>
<feature type="strand" evidence="6">
    <location>
        <begin position="4"/>
        <end position="14"/>
    </location>
</feature>
<feature type="helix" evidence="6">
    <location>
        <begin position="15"/>
        <end position="27"/>
    </location>
</feature>
<feature type="helix" evidence="6">
    <location>
        <begin position="31"/>
        <end position="39"/>
    </location>
</feature>
<feature type="turn" evidence="6">
    <location>
        <begin position="42"/>
        <end position="46"/>
    </location>
</feature>
<feature type="helix" evidence="6">
    <location>
        <begin position="47"/>
        <end position="49"/>
    </location>
</feature>
<feature type="strand" evidence="6">
    <location>
        <begin position="52"/>
        <end position="54"/>
    </location>
</feature>
<feature type="strand" evidence="7">
    <location>
        <begin position="55"/>
        <end position="58"/>
    </location>
</feature>
<feature type="helix" evidence="6">
    <location>
        <begin position="60"/>
        <end position="68"/>
    </location>
</feature>
<feature type="strand" evidence="7">
    <location>
        <begin position="71"/>
        <end position="73"/>
    </location>
</feature>
<feature type="strand" evidence="6">
    <location>
        <begin position="75"/>
        <end position="80"/>
    </location>
</feature>
<feature type="strand" evidence="6">
    <location>
        <begin position="83"/>
        <end position="90"/>
    </location>
</feature>
<organism>
    <name type="scientific">Escherichia coli (strain K12)</name>
    <dbReference type="NCBI Taxonomy" id="83333"/>
    <lineage>
        <taxon>Bacteria</taxon>
        <taxon>Pseudomonadati</taxon>
        <taxon>Pseudomonadota</taxon>
        <taxon>Gammaproteobacteria</taxon>
        <taxon>Enterobacterales</taxon>
        <taxon>Enterobacteriaceae</taxon>
        <taxon>Escherichia</taxon>
    </lineage>
</organism>
<proteinExistence type="evidence at protein level"/>
<sequence length="93" mass="10232">MAKTAAALHILVKEEKLALDLLEQIKNGADFGKLAKKHSICPSGKRGGDLGEFRQGQMVPAFDKVVFSCPVLEPTGPLHTQFGYHIIKVLYRN</sequence>
<gene>
    <name type="primary">ppiC</name>
    <name type="synonym">parVA</name>
    <name type="ordered locus">b3775</name>
    <name type="ordered locus">JW3748</name>
</gene>